<sequence>MGQIEWAMWANEQALASGLILVAGGIVATAGRFTQWYFGTYAIAAGVLVCLLEYPRGSRAKGSTLERCGQRYLTAVLKLLGPLSRNYYFRAALHLALSVPAGFLLATILGTVCLVIASIIYLLAAVRGEQWTPIEPRPKERPQVGGTIKQPPSNPPPRPPVEARKKPGEEDATPAGGPPGGPRVNPIPVTDEVV</sequence>
<comment type="function">
    <text evidence="1">Subunit of NADPH oxidase complexes that is required for the NADPH oxidase activity that generates, in various cell types, superoxide from molecular oxygen utilizing NADPH as an electron donor. Subunit of the phagocyte NADPH oxidase complex that mediates the transfer of electrons from cytosolic NADPH to O2 to produce the superoxide anion (O2(-)). In the activated complex, electrons are first transferred from NADPH to flavin adenine dinucleotide (FAD) and subsequently transferred via two heme molecules to molecular oxygen, producing superoxide through an outer-sphere reaction. Activation of the NADPH oxidase complex is initiated by the assembly of cytosolic subunits of the NADPH oxidase complex with the core NADPH oxidase complex to form a complex at the plasma membrane or phagosomal membrane. This activation process is initiated by phosphorylation dependent binding of the cytosolic NCF1/p47-phox subunit to the C-terminus of CYBA/p22-phox. Aassociates with NOX3 to form a functional NADPH oxidase constitutively generating superoxide.</text>
</comment>
<comment type="subunit">
    <text evidence="1 2">Component of the phagocyte NADPH oxidase core complex/cytochrome b558 complex, composed of CYBB (heavy chain (beta)) and CYBA (light chain (alpha)). Component of the phagocyte NADPH oxidase complex composed of an obligatory core heterodimer formed by the membrane proteins CYBA and CYBB and the cytosolic regulatory subunits NCF1/p47-phox, NCF2/p67-phox, NCF4/p40-phox and the small GTPase RAC1 or RAC2. Interacts with NCF1 (via SH3 domain) (By similarity). Interacts with SH3PXD2A (By similarity). Interacts with DUOX1, DUOX2 and TPO. Interacts with NOX4; this interaction mediates superoxide generation. Interacts with calprotectin (S100A8/9) (By similarity). Interacts with GBP7 (By similarity). Interacts with NOXO1. Forms a heterodimer with NOX3 and is essential for activity and cell membrane localization of NOX3. Interacts with NOX1 (By similarity).</text>
</comment>
<comment type="subcellular location">
    <subcellularLocation>
        <location evidence="1">Cell membrane</location>
        <topology evidence="1">Multi-pass membrane protein</topology>
    </subcellularLocation>
</comment>
<comment type="PTM">
    <text evidence="1">Phosphorylation at Thr-147 enhances NADPH oxidase activity by promoting NCF1/p47-phox binding.</text>
</comment>
<comment type="PTM">
    <text evidence="2">Ubiquitinated at Lys-149 likely by RNF145.</text>
</comment>
<comment type="similarity">
    <text evidence="4">Belongs to the p22phox family.</text>
</comment>
<gene>
    <name evidence="1" type="primary">CYBA</name>
</gene>
<proteinExistence type="evidence at transcript level"/>
<organism>
    <name type="scientific">Oryctolagus cuniculus</name>
    <name type="common">Rabbit</name>
    <dbReference type="NCBI Taxonomy" id="9986"/>
    <lineage>
        <taxon>Eukaryota</taxon>
        <taxon>Metazoa</taxon>
        <taxon>Chordata</taxon>
        <taxon>Craniata</taxon>
        <taxon>Vertebrata</taxon>
        <taxon>Euteleostomi</taxon>
        <taxon>Mammalia</taxon>
        <taxon>Eutheria</taxon>
        <taxon>Euarchontoglires</taxon>
        <taxon>Glires</taxon>
        <taxon>Lagomorpha</taxon>
        <taxon>Leporidae</taxon>
        <taxon>Oryctolagus</taxon>
    </lineage>
</organism>
<reference key="1">
    <citation type="journal article" date="2002" name="J. Leukoc. Biol.">
        <title>Cloning and sequencing of rabbit leukocyte NADPH oxidase genes reveals a unique p67(phox) homolog.</title>
        <authorList>
            <person name="Gauss K.A."/>
            <person name="Mascolo P.L."/>
            <person name="Siemsen D.W."/>
            <person name="Nelson L.K."/>
            <person name="Bunger P.L."/>
            <person name="Pagano P.J."/>
            <person name="Quinn M.T."/>
        </authorList>
    </citation>
    <scope>NUCLEOTIDE SEQUENCE [MRNA]</scope>
</reference>
<protein>
    <recommendedName>
        <fullName evidence="1">Cytochrome b-245 light chain</fullName>
    </recommendedName>
    <alternativeName>
        <fullName>Cytochrome b(558) alpha chain</fullName>
    </alternativeName>
    <alternativeName>
        <fullName>Cytochrome b558 subunit alpha</fullName>
    </alternativeName>
    <alternativeName>
        <fullName>Neutrophil cytochrome b 22 kDa polypeptide</fullName>
    </alternativeName>
    <alternativeName>
        <fullName>Superoxide-generating NADPH oxidase light chain subunit</fullName>
    </alternativeName>
    <alternativeName>
        <fullName>p22 phagocyte B-cytochrome</fullName>
    </alternativeName>
    <alternativeName>
        <fullName>p22-phox</fullName>
        <shortName>p22phox</shortName>
    </alternativeName>
</protein>
<feature type="initiator methionine" description="Removed" evidence="1">
    <location>
        <position position="1"/>
    </location>
</feature>
<feature type="chain" id="PRO_0000144910" description="Cytochrome b-245 light chain">
    <location>
        <begin position="2"/>
        <end position="194"/>
    </location>
</feature>
<feature type="topological domain" description="Cytoplasmic" evidence="4">
    <location>
        <begin position="2"/>
        <end position="7"/>
    </location>
</feature>
<feature type="transmembrane region" description="Helical" evidence="1">
    <location>
        <begin position="8"/>
        <end position="30"/>
    </location>
</feature>
<feature type="topological domain" description="Extracellular" evidence="4">
    <location>
        <begin position="31"/>
        <end position="35"/>
    </location>
</feature>
<feature type="transmembrane region" description="Helical" evidence="1">
    <location>
        <begin position="36"/>
        <end position="53"/>
    </location>
</feature>
<feature type="topological domain" description="Cytoplasmic" evidence="4">
    <location>
        <begin position="54"/>
        <end position="69"/>
    </location>
</feature>
<feature type="intramembrane region" evidence="1">
    <location>
        <begin position="70"/>
        <end position="80"/>
    </location>
</feature>
<feature type="topological domain" description="Cytoplasmic" evidence="4">
    <location>
        <begin position="81"/>
        <end position="86"/>
    </location>
</feature>
<feature type="transmembrane region" description="Helical" evidence="1">
    <location>
        <begin position="87"/>
        <end position="104"/>
    </location>
</feature>
<feature type="topological domain" description="Extracellular" evidence="4">
    <location>
        <position position="105"/>
    </location>
</feature>
<feature type="transmembrane region" description="Helical" evidence="1">
    <location>
        <begin position="106"/>
        <end position="126"/>
    </location>
</feature>
<feature type="topological domain" description="Cytoplasmic" evidence="4">
    <location>
        <begin position="127"/>
        <end position="194"/>
    </location>
</feature>
<feature type="region of interest" description="Disordered" evidence="3">
    <location>
        <begin position="134"/>
        <end position="194"/>
    </location>
</feature>
<feature type="modified residue" description="Phosphothreonine" evidence="1">
    <location>
        <position position="147"/>
    </location>
</feature>
<feature type="cross-link" description="Glycyl lysine isopeptide (Lys-Gly) (interchain with G-Cter in ubiquitin)" evidence="2">
    <location>
        <position position="149"/>
    </location>
</feature>
<keyword id="KW-1003">Cell membrane</keyword>
<keyword id="KW-0249">Electron transport</keyword>
<keyword id="KW-0349">Heme</keyword>
<keyword id="KW-0408">Iron</keyword>
<keyword id="KW-1017">Isopeptide bond</keyword>
<keyword id="KW-0472">Membrane</keyword>
<keyword id="KW-0479">Metal-binding</keyword>
<keyword id="KW-0521">NADP</keyword>
<keyword id="KW-0560">Oxidoreductase</keyword>
<keyword id="KW-0597">Phosphoprotein</keyword>
<keyword id="KW-1185">Reference proteome</keyword>
<keyword id="KW-0812">Transmembrane</keyword>
<keyword id="KW-1133">Transmembrane helix</keyword>
<keyword id="KW-0813">Transport</keyword>
<keyword id="KW-0832">Ubl conjugation</keyword>
<accession>Q95MN4</accession>
<name>CY24A_RABIT</name>
<evidence type="ECO:0000250" key="1">
    <source>
        <dbReference type="UniProtKB" id="P13498"/>
    </source>
</evidence>
<evidence type="ECO:0000250" key="2">
    <source>
        <dbReference type="UniProtKB" id="Q61462"/>
    </source>
</evidence>
<evidence type="ECO:0000256" key="3">
    <source>
        <dbReference type="SAM" id="MobiDB-lite"/>
    </source>
</evidence>
<evidence type="ECO:0000305" key="4"/>
<dbReference type="EMBL" id="AF323787">
    <property type="protein sequence ID" value="AAK60122.1"/>
    <property type="molecule type" value="mRNA"/>
</dbReference>
<dbReference type="RefSeq" id="NP_001075568.1">
    <property type="nucleotide sequence ID" value="NM_001082099.1"/>
</dbReference>
<dbReference type="SMR" id="Q95MN4"/>
<dbReference type="FunCoup" id="Q95MN4">
    <property type="interactions" value="113"/>
</dbReference>
<dbReference type="GeneID" id="100008800"/>
<dbReference type="KEGG" id="ocu:100008800"/>
<dbReference type="CTD" id="1535"/>
<dbReference type="InParanoid" id="Q95MN4"/>
<dbReference type="OrthoDB" id="2445232at2759"/>
<dbReference type="Proteomes" id="UP000001811">
    <property type="component" value="Unplaced"/>
</dbReference>
<dbReference type="GO" id="GO:0043020">
    <property type="term" value="C:NADPH oxidase complex"/>
    <property type="evidence" value="ECO:0000250"/>
    <property type="project" value="UniProtKB"/>
</dbReference>
<dbReference type="GO" id="GO:0005886">
    <property type="term" value="C:plasma membrane"/>
    <property type="evidence" value="ECO:0000250"/>
    <property type="project" value="UniProtKB"/>
</dbReference>
<dbReference type="GO" id="GO:0020037">
    <property type="term" value="F:heme binding"/>
    <property type="evidence" value="ECO:0007669"/>
    <property type="project" value="InterPro"/>
</dbReference>
<dbReference type="GO" id="GO:0046872">
    <property type="term" value="F:metal ion binding"/>
    <property type="evidence" value="ECO:0007669"/>
    <property type="project" value="UniProtKB-KW"/>
</dbReference>
<dbReference type="GO" id="GO:0016491">
    <property type="term" value="F:oxidoreductase activity"/>
    <property type="evidence" value="ECO:0007669"/>
    <property type="project" value="UniProtKB-KW"/>
</dbReference>
<dbReference type="GO" id="GO:0045087">
    <property type="term" value="P:innate immune response"/>
    <property type="evidence" value="ECO:0000250"/>
    <property type="project" value="UniProtKB"/>
</dbReference>
<dbReference type="InterPro" id="IPR007732">
    <property type="entry name" value="Cyt_b558_asu"/>
</dbReference>
<dbReference type="PANTHER" id="PTHR15168">
    <property type="entry name" value="CYTOCHROME B-245 LIGHT CHAIN"/>
    <property type="match status" value="1"/>
</dbReference>
<dbReference type="PANTHER" id="PTHR15168:SF0">
    <property type="entry name" value="CYTOCHROME B-245 LIGHT CHAIN"/>
    <property type="match status" value="1"/>
</dbReference>
<dbReference type="Pfam" id="PF05038">
    <property type="entry name" value="Cytochrom_B558a"/>
    <property type="match status" value="1"/>
</dbReference>
<dbReference type="PIRSF" id="PIRSF019635">
    <property type="entry name" value="Cytochr_b558a"/>
    <property type="match status" value="1"/>
</dbReference>